<protein>
    <recommendedName>
        <fullName evidence="1">Large ribosomal subunit protein bL32</fullName>
    </recommendedName>
    <alternativeName>
        <fullName evidence="2">50S ribosomal protein L32</fullName>
    </alternativeName>
</protein>
<sequence length="57" mass="6525">MAVPFRRTSKTKKRLRRTHFKLQVPGMVECPNCGEMKLSHRVCKACGSYKGKDVKSN</sequence>
<dbReference type="EMBL" id="AE017333">
    <property type="protein sequence ID" value="AAU40620.1"/>
    <property type="molecule type" value="Genomic_DNA"/>
</dbReference>
<dbReference type="EMBL" id="CP000002">
    <property type="protein sequence ID" value="AAU23263.1"/>
    <property type="molecule type" value="Genomic_DNA"/>
</dbReference>
<dbReference type="RefSeq" id="WP_003181522.1">
    <property type="nucleotide sequence ID" value="NC_006322.1"/>
</dbReference>
<dbReference type="SMR" id="Q65JZ4"/>
<dbReference type="STRING" id="279010.BL05155"/>
<dbReference type="GeneID" id="92861681"/>
<dbReference type="KEGG" id="bld:BLi01725"/>
<dbReference type="KEGG" id="bli:BL05155"/>
<dbReference type="eggNOG" id="COG0333">
    <property type="taxonomic scope" value="Bacteria"/>
</dbReference>
<dbReference type="HOGENOM" id="CLU_129084_1_3_9"/>
<dbReference type="Proteomes" id="UP000000606">
    <property type="component" value="Chromosome"/>
</dbReference>
<dbReference type="GO" id="GO:0015934">
    <property type="term" value="C:large ribosomal subunit"/>
    <property type="evidence" value="ECO:0007669"/>
    <property type="project" value="InterPro"/>
</dbReference>
<dbReference type="GO" id="GO:0003735">
    <property type="term" value="F:structural constituent of ribosome"/>
    <property type="evidence" value="ECO:0007669"/>
    <property type="project" value="InterPro"/>
</dbReference>
<dbReference type="GO" id="GO:0006412">
    <property type="term" value="P:translation"/>
    <property type="evidence" value="ECO:0007669"/>
    <property type="project" value="UniProtKB-UniRule"/>
</dbReference>
<dbReference type="HAMAP" id="MF_00340">
    <property type="entry name" value="Ribosomal_bL32"/>
    <property type="match status" value="1"/>
</dbReference>
<dbReference type="InterPro" id="IPR002677">
    <property type="entry name" value="Ribosomal_bL32"/>
</dbReference>
<dbReference type="InterPro" id="IPR044957">
    <property type="entry name" value="Ribosomal_bL32_bact"/>
</dbReference>
<dbReference type="InterPro" id="IPR011332">
    <property type="entry name" value="Ribosomal_zn-bd"/>
</dbReference>
<dbReference type="NCBIfam" id="TIGR01031">
    <property type="entry name" value="rpmF_bact"/>
    <property type="match status" value="1"/>
</dbReference>
<dbReference type="PANTHER" id="PTHR35534">
    <property type="entry name" value="50S RIBOSOMAL PROTEIN L32"/>
    <property type="match status" value="1"/>
</dbReference>
<dbReference type="PANTHER" id="PTHR35534:SF2">
    <property type="entry name" value="LARGE RIBOSOMAL SUBUNIT PROTEIN BL32"/>
    <property type="match status" value="1"/>
</dbReference>
<dbReference type="Pfam" id="PF01783">
    <property type="entry name" value="Ribosomal_L32p"/>
    <property type="match status" value="1"/>
</dbReference>
<dbReference type="SUPFAM" id="SSF57829">
    <property type="entry name" value="Zn-binding ribosomal proteins"/>
    <property type="match status" value="1"/>
</dbReference>
<evidence type="ECO:0000255" key="1">
    <source>
        <dbReference type="HAMAP-Rule" id="MF_00340"/>
    </source>
</evidence>
<evidence type="ECO:0000305" key="2"/>
<gene>
    <name evidence="1" type="primary">rpmF</name>
    <name type="ordered locus">BLi01725</name>
    <name type="ordered locus">BL05155</name>
</gene>
<name>RL32_BACLD</name>
<keyword id="KW-1185">Reference proteome</keyword>
<keyword id="KW-0687">Ribonucleoprotein</keyword>
<keyword id="KW-0689">Ribosomal protein</keyword>
<accession>Q65JZ4</accession>
<accession>Q62VE5</accession>
<proteinExistence type="inferred from homology"/>
<comment type="similarity">
    <text evidence="1">Belongs to the bacterial ribosomal protein bL32 family.</text>
</comment>
<reference key="1">
    <citation type="journal article" date="2004" name="J. Mol. Microbiol. Biotechnol.">
        <title>The complete genome sequence of Bacillus licheniformis DSM13, an organism with great industrial potential.</title>
        <authorList>
            <person name="Veith B."/>
            <person name="Herzberg C."/>
            <person name="Steckel S."/>
            <person name="Feesche J."/>
            <person name="Maurer K.H."/>
            <person name="Ehrenreich P."/>
            <person name="Baeumer S."/>
            <person name="Henne A."/>
            <person name="Liesegang H."/>
            <person name="Merkl R."/>
            <person name="Ehrenreich A."/>
            <person name="Gottschalk G."/>
        </authorList>
    </citation>
    <scope>NUCLEOTIDE SEQUENCE [LARGE SCALE GENOMIC DNA]</scope>
    <source>
        <strain>ATCC 14580 / DSM 13 / JCM 2505 / CCUG 7422 / NBRC 12200 / NCIMB 9375 / NCTC 10341 / NRRL NRS-1264 / Gibson 46</strain>
    </source>
</reference>
<reference key="2">
    <citation type="journal article" date="2004" name="Genome Biol.">
        <title>Complete genome sequence of the industrial bacterium Bacillus licheniformis and comparisons with closely related Bacillus species.</title>
        <authorList>
            <person name="Rey M.W."/>
            <person name="Ramaiya P."/>
            <person name="Nelson B.A."/>
            <person name="Brody-Karpin S.D."/>
            <person name="Zaretsky E.J."/>
            <person name="Tang M."/>
            <person name="Lopez de Leon A."/>
            <person name="Xiang H."/>
            <person name="Gusti V."/>
            <person name="Clausen I.G."/>
            <person name="Olsen P.B."/>
            <person name="Rasmussen M.D."/>
            <person name="Andersen J.T."/>
            <person name="Joergensen P.L."/>
            <person name="Larsen T.S."/>
            <person name="Sorokin A."/>
            <person name="Bolotin A."/>
            <person name="Lapidus A."/>
            <person name="Galleron N."/>
            <person name="Ehrlich S.D."/>
            <person name="Berka R.M."/>
        </authorList>
    </citation>
    <scope>NUCLEOTIDE SEQUENCE [LARGE SCALE GENOMIC DNA]</scope>
    <source>
        <strain>ATCC 14580 / DSM 13 / JCM 2505 / CCUG 7422 / NBRC 12200 / NCIMB 9375 / NCTC 10341 / NRRL NRS-1264 / Gibson 46</strain>
    </source>
</reference>
<feature type="chain" id="PRO_0000225703" description="Large ribosomal subunit protein bL32">
    <location>
        <begin position="1"/>
        <end position="57"/>
    </location>
</feature>
<organism>
    <name type="scientific">Bacillus licheniformis (strain ATCC 14580 / DSM 13 / JCM 2505 / CCUG 7422 / NBRC 12200 / NCIMB 9375 / NCTC 10341 / NRRL NRS-1264 / Gibson 46)</name>
    <dbReference type="NCBI Taxonomy" id="279010"/>
    <lineage>
        <taxon>Bacteria</taxon>
        <taxon>Bacillati</taxon>
        <taxon>Bacillota</taxon>
        <taxon>Bacilli</taxon>
        <taxon>Bacillales</taxon>
        <taxon>Bacillaceae</taxon>
        <taxon>Bacillus</taxon>
    </lineage>
</organism>